<evidence type="ECO:0000255" key="1">
    <source>
        <dbReference type="HAMAP-Rule" id="MF_00333"/>
    </source>
</evidence>
<feature type="chain" id="PRO_1000019465" description="Oxygen-dependent coproporphyrinogen-III oxidase">
    <location>
        <begin position="1"/>
        <end position="307"/>
    </location>
</feature>
<feature type="region of interest" description="Important for dimerization" evidence="1">
    <location>
        <begin position="242"/>
        <end position="277"/>
    </location>
</feature>
<feature type="active site" description="Proton donor" evidence="1">
    <location>
        <position position="108"/>
    </location>
</feature>
<feature type="binding site" evidence="1">
    <location>
        <position position="94"/>
    </location>
    <ligand>
        <name>substrate</name>
    </ligand>
</feature>
<feature type="binding site" evidence="1">
    <location>
        <position position="98"/>
    </location>
    <ligand>
        <name>a divalent metal cation</name>
        <dbReference type="ChEBI" id="CHEBI:60240"/>
    </ligand>
</feature>
<feature type="binding site" evidence="1">
    <location>
        <position position="108"/>
    </location>
    <ligand>
        <name>a divalent metal cation</name>
        <dbReference type="ChEBI" id="CHEBI:60240"/>
    </ligand>
</feature>
<feature type="binding site" evidence="1">
    <location>
        <begin position="110"/>
        <end position="112"/>
    </location>
    <ligand>
        <name>substrate</name>
    </ligand>
</feature>
<feature type="binding site" evidence="1">
    <location>
        <position position="147"/>
    </location>
    <ligand>
        <name>a divalent metal cation</name>
        <dbReference type="ChEBI" id="CHEBI:60240"/>
    </ligand>
</feature>
<feature type="binding site" evidence="1">
    <location>
        <position position="177"/>
    </location>
    <ligand>
        <name>a divalent metal cation</name>
        <dbReference type="ChEBI" id="CHEBI:60240"/>
    </ligand>
</feature>
<feature type="binding site" evidence="1">
    <location>
        <begin position="260"/>
        <end position="262"/>
    </location>
    <ligand>
        <name>substrate</name>
    </ligand>
</feature>
<feature type="site" description="Important for dimerization" evidence="1">
    <location>
        <position position="177"/>
    </location>
</feature>
<reference key="1">
    <citation type="journal article" date="2011" name="Stand. Genomic Sci.">
        <title>Complete genome sequence of the halophilic and highly halotolerant Chromohalobacter salexigens type strain (1H11(T)).</title>
        <authorList>
            <person name="Copeland A."/>
            <person name="O'Connor K."/>
            <person name="Lucas S."/>
            <person name="Lapidus A."/>
            <person name="Berry K.W."/>
            <person name="Detter J.C."/>
            <person name="Del Rio T.G."/>
            <person name="Hammon N."/>
            <person name="Dalin E."/>
            <person name="Tice H."/>
            <person name="Pitluck S."/>
            <person name="Bruce D."/>
            <person name="Goodwin L."/>
            <person name="Han C."/>
            <person name="Tapia R."/>
            <person name="Saunders E."/>
            <person name="Schmutz J."/>
            <person name="Brettin T."/>
            <person name="Larimer F."/>
            <person name="Land M."/>
            <person name="Hauser L."/>
            <person name="Vargas C."/>
            <person name="Nieto J.J."/>
            <person name="Kyrpides N.C."/>
            <person name="Ivanova N."/>
            <person name="Goker M."/>
            <person name="Klenk H.P."/>
            <person name="Csonka L.N."/>
            <person name="Woyke T."/>
        </authorList>
    </citation>
    <scope>NUCLEOTIDE SEQUENCE [LARGE SCALE GENOMIC DNA]</scope>
    <source>
        <strain>ATCC BAA-138 / DSM 3043 / CIP 106854 / NCIMB 13768 / 1H11</strain>
    </source>
</reference>
<keyword id="KW-0963">Cytoplasm</keyword>
<keyword id="KW-0350">Heme biosynthesis</keyword>
<keyword id="KW-0479">Metal-binding</keyword>
<keyword id="KW-0560">Oxidoreductase</keyword>
<keyword id="KW-0627">Porphyrin biosynthesis</keyword>
<keyword id="KW-1185">Reference proteome</keyword>
<name>HEM6_CHRSD</name>
<protein>
    <recommendedName>
        <fullName evidence="1">Oxygen-dependent coproporphyrinogen-III oxidase</fullName>
        <shortName evidence="1">CPO</shortName>
        <shortName evidence="1">Coprogen oxidase</shortName>
        <shortName evidence="1">Coproporphyrinogenase</shortName>
        <ecNumber evidence="1">1.3.3.3</ecNumber>
    </recommendedName>
</protein>
<dbReference type="EC" id="1.3.3.3" evidence="1"/>
<dbReference type="EMBL" id="CP000285">
    <property type="protein sequence ID" value="ABE60209.1"/>
    <property type="molecule type" value="Genomic_DNA"/>
</dbReference>
<dbReference type="RefSeq" id="WP_011508155.1">
    <property type="nucleotide sequence ID" value="NC_007963.1"/>
</dbReference>
<dbReference type="SMR" id="Q1QTJ9"/>
<dbReference type="STRING" id="290398.Csal_2863"/>
<dbReference type="GeneID" id="95335558"/>
<dbReference type="KEGG" id="csa:Csal_2863"/>
<dbReference type="eggNOG" id="COG0408">
    <property type="taxonomic scope" value="Bacteria"/>
</dbReference>
<dbReference type="HOGENOM" id="CLU_026169_0_1_6"/>
<dbReference type="OrthoDB" id="9777553at2"/>
<dbReference type="UniPathway" id="UPA00251">
    <property type="reaction ID" value="UER00322"/>
</dbReference>
<dbReference type="Proteomes" id="UP000000239">
    <property type="component" value="Chromosome"/>
</dbReference>
<dbReference type="GO" id="GO:0005737">
    <property type="term" value="C:cytoplasm"/>
    <property type="evidence" value="ECO:0007669"/>
    <property type="project" value="UniProtKB-SubCell"/>
</dbReference>
<dbReference type="GO" id="GO:0004109">
    <property type="term" value="F:coproporphyrinogen oxidase activity"/>
    <property type="evidence" value="ECO:0007669"/>
    <property type="project" value="UniProtKB-UniRule"/>
</dbReference>
<dbReference type="GO" id="GO:0046872">
    <property type="term" value="F:metal ion binding"/>
    <property type="evidence" value="ECO:0007669"/>
    <property type="project" value="UniProtKB-KW"/>
</dbReference>
<dbReference type="GO" id="GO:0042803">
    <property type="term" value="F:protein homodimerization activity"/>
    <property type="evidence" value="ECO:0000250"/>
    <property type="project" value="UniProtKB"/>
</dbReference>
<dbReference type="GO" id="GO:0006782">
    <property type="term" value="P:protoporphyrinogen IX biosynthetic process"/>
    <property type="evidence" value="ECO:0007669"/>
    <property type="project" value="UniProtKB-UniRule"/>
</dbReference>
<dbReference type="FunFam" id="3.40.1500.10:FF:000001">
    <property type="entry name" value="Oxygen-dependent coproporphyrinogen-III oxidase"/>
    <property type="match status" value="1"/>
</dbReference>
<dbReference type="Gene3D" id="3.40.1500.10">
    <property type="entry name" value="Coproporphyrinogen III oxidase, aerobic"/>
    <property type="match status" value="1"/>
</dbReference>
<dbReference type="HAMAP" id="MF_00333">
    <property type="entry name" value="Coprogen_oxidas"/>
    <property type="match status" value="1"/>
</dbReference>
<dbReference type="InterPro" id="IPR001260">
    <property type="entry name" value="Coprogen_oxidase_aer"/>
</dbReference>
<dbReference type="InterPro" id="IPR036406">
    <property type="entry name" value="Coprogen_oxidase_aer_sf"/>
</dbReference>
<dbReference type="InterPro" id="IPR018375">
    <property type="entry name" value="Coprogen_oxidase_CS"/>
</dbReference>
<dbReference type="NCBIfam" id="NF003727">
    <property type="entry name" value="PRK05330.1"/>
    <property type="match status" value="1"/>
</dbReference>
<dbReference type="PANTHER" id="PTHR10755">
    <property type="entry name" value="COPROPORPHYRINOGEN III OXIDASE, MITOCHONDRIAL"/>
    <property type="match status" value="1"/>
</dbReference>
<dbReference type="PANTHER" id="PTHR10755:SF0">
    <property type="entry name" value="OXYGEN-DEPENDENT COPROPORPHYRINOGEN-III OXIDASE, MITOCHONDRIAL"/>
    <property type="match status" value="1"/>
</dbReference>
<dbReference type="Pfam" id="PF01218">
    <property type="entry name" value="Coprogen_oxidas"/>
    <property type="match status" value="1"/>
</dbReference>
<dbReference type="PIRSF" id="PIRSF000166">
    <property type="entry name" value="Coproporphyri_ox"/>
    <property type="match status" value="1"/>
</dbReference>
<dbReference type="PRINTS" id="PR00073">
    <property type="entry name" value="COPRGNOXDASE"/>
</dbReference>
<dbReference type="SUPFAM" id="SSF102886">
    <property type="entry name" value="Coproporphyrinogen III oxidase"/>
    <property type="match status" value="1"/>
</dbReference>
<dbReference type="PROSITE" id="PS01021">
    <property type="entry name" value="COPROGEN_OXIDASE"/>
    <property type="match status" value="1"/>
</dbReference>
<proteinExistence type="inferred from homology"/>
<accession>Q1QTJ9</accession>
<sequence>MAHPHLDKVKEYLLDLQDRLCDGLAAEEGDTAFREDSWTREAGGGGRSRVIENGEVFEKGGVNFSHVFGERLPASASAARPELAGRSFHAVGVSWVLHPRNPHVPTAHGNVRFFIAEKEGAEPVWWFGGGFDLTPFYPVFEDVVHWHRVAQETCAPFGDDVYPRFKRWCDEYFTLHHRDETRGVGGLFFDDLNEWEFERCFAFQRAVGDAFLEAYVPIVRRRQATEYGERERDFQAFRRGRYVEFNLVWDRGTLFGLQSGGRTESILMSMPPLAQWQYCWTPEPGSPEARLADEFLTPREWLEEAEA</sequence>
<organism>
    <name type="scientific">Chromohalobacter salexigens (strain ATCC BAA-138 / DSM 3043 / CIP 106854 / NCIMB 13768 / 1H11)</name>
    <dbReference type="NCBI Taxonomy" id="290398"/>
    <lineage>
        <taxon>Bacteria</taxon>
        <taxon>Pseudomonadati</taxon>
        <taxon>Pseudomonadota</taxon>
        <taxon>Gammaproteobacteria</taxon>
        <taxon>Oceanospirillales</taxon>
        <taxon>Halomonadaceae</taxon>
        <taxon>Chromohalobacter</taxon>
    </lineage>
</organism>
<gene>
    <name evidence="1" type="primary">hemF</name>
    <name type="ordered locus">Csal_2863</name>
</gene>
<comment type="function">
    <text evidence="1">Involved in the heme biosynthesis. Catalyzes the aerobic oxidative decarboxylation of propionate groups of rings A and B of coproporphyrinogen-III to yield the vinyl groups in protoporphyrinogen-IX.</text>
</comment>
<comment type="catalytic activity">
    <reaction evidence="1">
        <text>coproporphyrinogen III + O2 + 2 H(+) = protoporphyrinogen IX + 2 CO2 + 2 H2O</text>
        <dbReference type="Rhea" id="RHEA:18257"/>
        <dbReference type="ChEBI" id="CHEBI:15377"/>
        <dbReference type="ChEBI" id="CHEBI:15378"/>
        <dbReference type="ChEBI" id="CHEBI:15379"/>
        <dbReference type="ChEBI" id="CHEBI:16526"/>
        <dbReference type="ChEBI" id="CHEBI:57307"/>
        <dbReference type="ChEBI" id="CHEBI:57309"/>
        <dbReference type="EC" id="1.3.3.3"/>
    </reaction>
</comment>
<comment type="cofactor">
    <cofactor evidence="1">
        <name>a divalent metal cation</name>
        <dbReference type="ChEBI" id="CHEBI:60240"/>
    </cofactor>
</comment>
<comment type="pathway">
    <text evidence="1">Porphyrin-containing compound metabolism; protoporphyrin-IX biosynthesis; protoporphyrinogen-IX from coproporphyrinogen-III (O2 route): step 1/1.</text>
</comment>
<comment type="subunit">
    <text evidence="1">Homodimer.</text>
</comment>
<comment type="subcellular location">
    <subcellularLocation>
        <location evidence="1">Cytoplasm</location>
    </subcellularLocation>
</comment>
<comment type="similarity">
    <text evidence="1">Belongs to the aerobic coproporphyrinogen-III oxidase family.</text>
</comment>